<feature type="chain" id="PRO_0000168614" description="Uncharacterized protein YbaA">
    <location>
        <begin position="1"/>
        <end position="117"/>
    </location>
</feature>
<sequence length="117" mass="13318">MKYVDGFVVAVPADKKDAYREMAAKAAPLFKEFGALRIVECWASDVPDGKVTDFRMAVKAEENEEVVFSWIEYPSKEVRDAANQKMMSDPRMKEFGESMPFDGKRMIYGGFESIIDE</sequence>
<reference key="1">
    <citation type="journal article" date="2002" name="Proc. Natl. Acad. Sci. U.S.A.">
        <title>Extensive mosaic structure revealed by the complete genome sequence of uropathogenic Escherichia coli.</title>
        <authorList>
            <person name="Welch R.A."/>
            <person name="Burland V."/>
            <person name="Plunkett G. III"/>
            <person name="Redford P."/>
            <person name="Roesch P."/>
            <person name="Rasko D."/>
            <person name="Buckles E.L."/>
            <person name="Liou S.-R."/>
            <person name="Boutin A."/>
            <person name="Hackett J."/>
            <person name="Stroud D."/>
            <person name="Mayhew G.F."/>
            <person name="Rose D.J."/>
            <person name="Zhou S."/>
            <person name="Schwartz D.C."/>
            <person name="Perna N.T."/>
            <person name="Mobley H.L.T."/>
            <person name="Donnenberg M.S."/>
            <person name="Blattner F.R."/>
        </authorList>
    </citation>
    <scope>NUCLEOTIDE SEQUENCE [LARGE SCALE GENOMIC DNA]</scope>
    <source>
        <strain>CFT073 / ATCC 700928 / UPEC</strain>
    </source>
</reference>
<dbReference type="EMBL" id="AE014075">
    <property type="protein sequence ID" value="AAN79052.1"/>
    <property type="molecule type" value="Genomic_DNA"/>
</dbReference>
<dbReference type="RefSeq" id="WP_000878140.1">
    <property type="nucleotide sequence ID" value="NZ_CP051263.1"/>
</dbReference>
<dbReference type="SMR" id="P0AAQ7"/>
<dbReference type="STRING" id="199310.c0574"/>
<dbReference type="KEGG" id="ecc:c0574"/>
<dbReference type="eggNOG" id="COG5507">
    <property type="taxonomic scope" value="Bacteria"/>
</dbReference>
<dbReference type="HOGENOM" id="CLU_136844_0_0_6"/>
<dbReference type="BioCyc" id="ECOL199310:C0574-MONOMER"/>
<dbReference type="Proteomes" id="UP000001410">
    <property type="component" value="Chromosome"/>
</dbReference>
<dbReference type="Gene3D" id="3.30.70.100">
    <property type="match status" value="1"/>
</dbReference>
<dbReference type="InterPro" id="IPR011008">
    <property type="entry name" value="Dimeric_a/b-barrel"/>
</dbReference>
<dbReference type="InterPro" id="IPR009874">
    <property type="entry name" value="DUF1428"/>
</dbReference>
<dbReference type="Pfam" id="PF07237">
    <property type="entry name" value="DUF1428"/>
    <property type="match status" value="1"/>
</dbReference>
<dbReference type="PIRSF" id="PIRSF007028">
    <property type="entry name" value="UCP007028"/>
    <property type="match status" value="1"/>
</dbReference>
<dbReference type="SUPFAM" id="SSF54909">
    <property type="entry name" value="Dimeric alpha+beta barrel"/>
    <property type="match status" value="1"/>
</dbReference>
<gene>
    <name type="primary">ybaA</name>
    <name type="ordered locus">c0574</name>
</gene>
<proteinExistence type="predicted"/>
<keyword id="KW-1185">Reference proteome</keyword>
<protein>
    <recommendedName>
        <fullName>Uncharacterized protein YbaA</fullName>
    </recommendedName>
</protein>
<organism>
    <name type="scientific">Escherichia coli O6:H1 (strain CFT073 / ATCC 700928 / UPEC)</name>
    <dbReference type="NCBI Taxonomy" id="199310"/>
    <lineage>
        <taxon>Bacteria</taxon>
        <taxon>Pseudomonadati</taxon>
        <taxon>Pseudomonadota</taxon>
        <taxon>Gammaproteobacteria</taxon>
        <taxon>Enterobacterales</taxon>
        <taxon>Enterobacteriaceae</taxon>
        <taxon>Escherichia</taxon>
    </lineage>
</organism>
<name>YBAA_ECOL6</name>
<accession>P0AAQ7</accession>
<accession>P09161</accession>